<accession>B3CPS8</accession>
<gene>
    <name evidence="1" type="primary">murB</name>
    <name type="ordered locus">WP0473</name>
</gene>
<name>MURB_WOLPP</name>
<organism>
    <name type="scientific">Wolbachia pipientis subsp. Culex pipiens (strain wPip)</name>
    <dbReference type="NCBI Taxonomy" id="570417"/>
    <lineage>
        <taxon>Bacteria</taxon>
        <taxon>Pseudomonadati</taxon>
        <taxon>Pseudomonadota</taxon>
        <taxon>Alphaproteobacteria</taxon>
        <taxon>Rickettsiales</taxon>
        <taxon>Anaplasmataceae</taxon>
        <taxon>Wolbachieae</taxon>
        <taxon>Wolbachia</taxon>
    </lineage>
</organism>
<keyword id="KW-0131">Cell cycle</keyword>
<keyword id="KW-0132">Cell division</keyword>
<keyword id="KW-0133">Cell shape</keyword>
<keyword id="KW-0961">Cell wall biogenesis/degradation</keyword>
<keyword id="KW-0963">Cytoplasm</keyword>
<keyword id="KW-0274">FAD</keyword>
<keyword id="KW-0285">Flavoprotein</keyword>
<keyword id="KW-0521">NADP</keyword>
<keyword id="KW-0560">Oxidoreductase</keyword>
<keyword id="KW-0573">Peptidoglycan synthesis</keyword>
<feature type="chain" id="PRO_1000117147" description="UDP-N-acetylenolpyruvoylglucosamine reductase">
    <location>
        <begin position="1"/>
        <end position="294"/>
    </location>
</feature>
<feature type="domain" description="FAD-binding PCMH-type" evidence="1">
    <location>
        <begin position="26"/>
        <end position="189"/>
    </location>
</feature>
<feature type="active site" evidence="1">
    <location>
        <position position="169"/>
    </location>
</feature>
<feature type="active site" description="Proton donor" evidence="1">
    <location>
        <position position="218"/>
    </location>
</feature>
<feature type="active site" evidence="1">
    <location>
        <position position="288"/>
    </location>
</feature>
<protein>
    <recommendedName>
        <fullName evidence="1">UDP-N-acetylenolpyruvoylglucosamine reductase</fullName>
        <ecNumber evidence="1">1.3.1.98</ecNumber>
    </recommendedName>
    <alternativeName>
        <fullName evidence="1">UDP-N-acetylmuramate dehydrogenase</fullName>
    </alternativeName>
</protein>
<proteinExistence type="inferred from homology"/>
<comment type="function">
    <text evidence="1">Cell wall formation.</text>
</comment>
<comment type="catalytic activity">
    <reaction evidence="1">
        <text>UDP-N-acetyl-alpha-D-muramate + NADP(+) = UDP-N-acetyl-3-O-(1-carboxyvinyl)-alpha-D-glucosamine + NADPH + H(+)</text>
        <dbReference type="Rhea" id="RHEA:12248"/>
        <dbReference type="ChEBI" id="CHEBI:15378"/>
        <dbReference type="ChEBI" id="CHEBI:57783"/>
        <dbReference type="ChEBI" id="CHEBI:58349"/>
        <dbReference type="ChEBI" id="CHEBI:68483"/>
        <dbReference type="ChEBI" id="CHEBI:70757"/>
        <dbReference type="EC" id="1.3.1.98"/>
    </reaction>
</comment>
<comment type="cofactor">
    <cofactor evidence="1">
        <name>FAD</name>
        <dbReference type="ChEBI" id="CHEBI:57692"/>
    </cofactor>
</comment>
<comment type="pathway">
    <text evidence="1">Cell wall biogenesis; peptidoglycan biosynthesis.</text>
</comment>
<comment type="subcellular location">
    <subcellularLocation>
        <location evidence="1">Cytoplasm</location>
    </subcellularLocation>
</comment>
<comment type="similarity">
    <text evidence="1">Belongs to the MurB family.</text>
</comment>
<evidence type="ECO:0000255" key="1">
    <source>
        <dbReference type="HAMAP-Rule" id="MF_00037"/>
    </source>
</evidence>
<sequence>MLISLPKVCGIYRYNVSMSKMTWLNVGGQADVLFKPRDIEDLMCLIKDAELPISVIGATSNIIIRDSGIRGITVKLGKEFAYIKCKDNSSIVAGGAALLSNLAYFAGEQQISGLEFLAGIPGTVGGGIEMNAGAYGSDIASVVKFIRAVNLEDGNLYEFSSEEMGYFYRGHSLKGRWIFIEAEFKGVSSEYELILQRLKEVIDKKNKSQPVRGKTAGCIFKNPIGCKAWKLIDESGCRGLDNGVAKISKKHCNFLLNYNNATALDLENLGNRVKDAVKDKFNIELEWEIRVLGR</sequence>
<reference key="1">
    <citation type="journal article" date="2008" name="Mol. Biol. Evol.">
        <title>Genome evolution of Wolbachia strain wPip from the Culex pipiens group.</title>
        <authorList>
            <person name="Klasson L."/>
            <person name="Walker T."/>
            <person name="Sebaihia M."/>
            <person name="Sanders M.J."/>
            <person name="Quail M.A."/>
            <person name="Lord A."/>
            <person name="Sanders S."/>
            <person name="Earl J."/>
            <person name="O'Neill S.L."/>
            <person name="Thomson N."/>
            <person name="Sinkins S.P."/>
            <person name="Parkhill J."/>
        </authorList>
    </citation>
    <scope>NUCLEOTIDE SEQUENCE [LARGE SCALE GENOMIC DNA]</scope>
    <source>
        <strain>wPip</strain>
    </source>
</reference>
<dbReference type="EC" id="1.3.1.98" evidence="1"/>
<dbReference type="EMBL" id="AM999887">
    <property type="protein sequence ID" value="CAQ54581.1"/>
    <property type="molecule type" value="Genomic_DNA"/>
</dbReference>
<dbReference type="RefSeq" id="WP_012481841.1">
    <property type="nucleotide sequence ID" value="NC_010981.1"/>
</dbReference>
<dbReference type="SMR" id="B3CPS8"/>
<dbReference type="KEGG" id="wpi:WP0473"/>
<dbReference type="eggNOG" id="COG0812">
    <property type="taxonomic scope" value="Bacteria"/>
</dbReference>
<dbReference type="HOGENOM" id="CLU_035304_1_0_5"/>
<dbReference type="UniPathway" id="UPA00219"/>
<dbReference type="Proteomes" id="UP000008814">
    <property type="component" value="Chromosome"/>
</dbReference>
<dbReference type="GO" id="GO:0005829">
    <property type="term" value="C:cytosol"/>
    <property type="evidence" value="ECO:0007669"/>
    <property type="project" value="TreeGrafter"/>
</dbReference>
<dbReference type="GO" id="GO:0071949">
    <property type="term" value="F:FAD binding"/>
    <property type="evidence" value="ECO:0007669"/>
    <property type="project" value="InterPro"/>
</dbReference>
<dbReference type="GO" id="GO:0008762">
    <property type="term" value="F:UDP-N-acetylmuramate dehydrogenase activity"/>
    <property type="evidence" value="ECO:0007669"/>
    <property type="project" value="UniProtKB-UniRule"/>
</dbReference>
<dbReference type="GO" id="GO:0051301">
    <property type="term" value="P:cell division"/>
    <property type="evidence" value="ECO:0007669"/>
    <property type="project" value="UniProtKB-KW"/>
</dbReference>
<dbReference type="GO" id="GO:0071555">
    <property type="term" value="P:cell wall organization"/>
    <property type="evidence" value="ECO:0007669"/>
    <property type="project" value="UniProtKB-KW"/>
</dbReference>
<dbReference type="GO" id="GO:0009252">
    <property type="term" value="P:peptidoglycan biosynthetic process"/>
    <property type="evidence" value="ECO:0007669"/>
    <property type="project" value="UniProtKB-UniRule"/>
</dbReference>
<dbReference type="GO" id="GO:0008360">
    <property type="term" value="P:regulation of cell shape"/>
    <property type="evidence" value="ECO:0007669"/>
    <property type="project" value="UniProtKB-KW"/>
</dbReference>
<dbReference type="Gene3D" id="3.30.465.10">
    <property type="match status" value="1"/>
</dbReference>
<dbReference type="Gene3D" id="3.90.78.10">
    <property type="entry name" value="UDP-N-acetylenolpyruvoylglucosamine reductase, C-terminal domain"/>
    <property type="match status" value="1"/>
</dbReference>
<dbReference type="Gene3D" id="3.30.43.10">
    <property type="entry name" value="Uridine Diphospho-n-acetylenolpyruvylglucosamine Reductase, domain 2"/>
    <property type="match status" value="1"/>
</dbReference>
<dbReference type="HAMAP" id="MF_00037">
    <property type="entry name" value="MurB"/>
    <property type="match status" value="1"/>
</dbReference>
<dbReference type="InterPro" id="IPR016166">
    <property type="entry name" value="FAD-bd_PCMH"/>
</dbReference>
<dbReference type="InterPro" id="IPR036318">
    <property type="entry name" value="FAD-bd_PCMH-like_sf"/>
</dbReference>
<dbReference type="InterPro" id="IPR016167">
    <property type="entry name" value="FAD-bd_PCMH_sub1"/>
</dbReference>
<dbReference type="InterPro" id="IPR016169">
    <property type="entry name" value="FAD-bd_PCMH_sub2"/>
</dbReference>
<dbReference type="InterPro" id="IPR003170">
    <property type="entry name" value="MurB"/>
</dbReference>
<dbReference type="InterPro" id="IPR011601">
    <property type="entry name" value="MurB_C"/>
</dbReference>
<dbReference type="InterPro" id="IPR036635">
    <property type="entry name" value="MurB_C_sf"/>
</dbReference>
<dbReference type="InterPro" id="IPR006094">
    <property type="entry name" value="Oxid_FAD_bind_N"/>
</dbReference>
<dbReference type="NCBIfam" id="TIGR00179">
    <property type="entry name" value="murB"/>
    <property type="match status" value="1"/>
</dbReference>
<dbReference type="NCBIfam" id="NF010480">
    <property type="entry name" value="PRK13905.1"/>
    <property type="match status" value="1"/>
</dbReference>
<dbReference type="PANTHER" id="PTHR21071">
    <property type="entry name" value="UDP-N-ACETYLENOLPYRUVOYLGLUCOSAMINE REDUCTASE"/>
    <property type="match status" value="1"/>
</dbReference>
<dbReference type="PANTHER" id="PTHR21071:SF4">
    <property type="entry name" value="UDP-N-ACETYLENOLPYRUVOYLGLUCOSAMINE REDUCTASE"/>
    <property type="match status" value="1"/>
</dbReference>
<dbReference type="Pfam" id="PF01565">
    <property type="entry name" value="FAD_binding_4"/>
    <property type="match status" value="1"/>
</dbReference>
<dbReference type="Pfam" id="PF02873">
    <property type="entry name" value="MurB_C"/>
    <property type="match status" value="1"/>
</dbReference>
<dbReference type="SUPFAM" id="SSF56176">
    <property type="entry name" value="FAD-binding/transporter-associated domain-like"/>
    <property type="match status" value="1"/>
</dbReference>
<dbReference type="SUPFAM" id="SSF56194">
    <property type="entry name" value="Uridine diphospho-N-Acetylenolpyruvylglucosamine reductase, MurB, C-terminal domain"/>
    <property type="match status" value="1"/>
</dbReference>
<dbReference type="PROSITE" id="PS51387">
    <property type="entry name" value="FAD_PCMH"/>
    <property type="match status" value="1"/>
</dbReference>